<keyword id="KW-0375">Hydrogen ion transport</keyword>
<keyword id="KW-0406">Ion transport</keyword>
<keyword id="KW-0472">Membrane</keyword>
<keyword id="KW-1185">Reference proteome</keyword>
<keyword id="KW-0813">Transport</keyword>
<keyword id="KW-0926">Vacuole</keyword>
<feature type="chain" id="PRO_0000406051" description="V-type proton ATPase subunit F">
    <location>
        <begin position="1"/>
        <end position="119"/>
    </location>
</feature>
<dbReference type="EMBL" id="DS480422">
    <property type="protein sequence ID" value="EDO16579.1"/>
    <property type="molecule type" value="Genomic_DNA"/>
</dbReference>
<dbReference type="RefSeq" id="XP_001644437.1">
    <property type="nucleotide sequence ID" value="XM_001644387.1"/>
</dbReference>
<dbReference type="SMR" id="A7TMI5"/>
<dbReference type="FunCoup" id="A7TMI5">
    <property type="interactions" value="789"/>
</dbReference>
<dbReference type="STRING" id="436907.A7TMI5"/>
<dbReference type="GeneID" id="5544739"/>
<dbReference type="KEGG" id="vpo:Kpol_1064p61"/>
<dbReference type="eggNOG" id="KOG3432">
    <property type="taxonomic scope" value="Eukaryota"/>
</dbReference>
<dbReference type="HOGENOM" id="CLU_135754_0_0_1"/>
<dbReference type="InParanoid" id="A7TMI5"/>
<dbReference type="OMA" id="IIICQHI"/>
<dbReference type="OrthoDB" id="10261947at2759"/>
<dbReference type="PhylomeDB" id="A7TMI5"/>
<dbReference type="Proteomes" id="UP000000267">
    <property type="component" value="Unassembled WGS sequence"/>
</dbReference>
<dbReference type="GO" id="GO:0000329">
    <property type="term" value="C:fungal-type vacuole membrane"/>
    <property type="evidence" value="ECO:0007669"/>
    <property type="project" value="TreeGrafter"/>
</dbReference>
<dbReference type="GO" id="GO:0000221">
    <property type="term" value="C:vacuolar proton-transporting V-type ATPase, V1 domain"/>
    <property type="evidence" value="ECO:0000250"/>
    <property type="project" value="UniProtKB"/>
</dbReference>
<dbReference type="GO" id="GO:0046961">
    <property type="term" value="F:proton-transporting ATPase activity, rotational mechanism"/>
    <property type="evidence" value="ECO:0007669"/>
    <property type="project" value="InterPro"/>
</dbReference>
<dbReference type="FunFam" id="3.40.50.10580:FF:000002">
    <property type="entry name" value="V-type proton ATPase subunit F"/>
    <property type="match status" value="1"/>
</dbReference>
<dbReference type="Gene3D" id="3.40.50.10580">
    <property type="entry name" value="ATPase, V1 complex, subunit F"/>
    <property type="match status" value="1"/>
</dbReference>
<dbReference type="InterPro" id="IPR008218">
    <property type="entry name" value="ATPase_V1-cplx_f_g_su"/>
</dbReference>
<dbReference type="InterPro" id="IPR005772">
    <property type="entry name" value="ATPase_V1-cplx_fsu_euk"/>
</dbReference>
<dbReference type="InterPro" id="IPR036906">
    <property type="entry name" value="ATPase_V1_fsu_sf"/>
</dbReference>
<dbReference type="NCBIfam" id="TIGR01101">
    <property type="entry name" value="V_ATP_synt_F"/>
    <property type="match status" value="1"/>
</dbReference>
<dbReference type="PANTHER" id="PTHR13861:SF2">
    <property type="entry name" value="V-TYPE PROTON ATPASE SUBUNIT F"/>
    <property type="match status" value="1"/>
</dbReference>
<dbReference type="PANTHER" id="PTHR13861">
    <property type="entry name" value="VACUOLAR ATP SYNTHASE SUBUNIT F"/>
    <property type="match status" value="1"/>
</dbReference>
<dbReference type="Pfam" id="PF01990">
    <property type="entry name" value="ATP-synt_F"/>
    <property type="match status" value="1"/>
</dbReference>
<dbReference type="PIRSF" id="PIRSF015945">
    <property type="entry name" value="ATPase_V1_F_euk"/>
    <property type="match status" value="1"/>
</dbReference>
<dbReference type="SUPFAM" id="SSF159468">
    <property type="entry name" value="AtpF-like"/>
    <property type="match status" value="1"/>
</dbReference>
<reference key="1">
    <citation type="journal article" date="2007" name="Proc. Natl. Acad. Sci. U.S.A.">
        <title>Independent sorting-out of thousands of duplicated gene pairs in two yeast species descended from a whole-genome duplication.</title>
        <authorList>
            <person name="Scannell D.R."/>
            <person name="Frank A.C."/>
            <person name="Conant G.C."/>
            <person name="Byrne K.P."/>
            <person name="Woolfit M."/>
            <person name="Wolfe K.H."/>
        </authorList>
    </citation>
    <scope>NUCLEOTIDE SEQUENCE [LARGE SCALE GENOMIC DNA]</scope>
    <source>
        <strain>ATCC 22028 / DSM 70294 / BCRC 21397 / CBS 2163 / NBRC 10782 / NRRL Y-8283 / UCD 57-17</strain>
    </source>
</reference>
<organism>
    <name type="scientific">Vanderwaltozyma polyspora (strain ATCC 22028 / DSM 70294 / BCRC 21397 / CBS 2163 / NBRC 10782 / NRRL Y-8283 / UCD 57-17)</name>
    <name type="common">Kluyveromyces polysporus</name>
    <dbReference type="NCBI Taxonomy" id="436907"/>
    <lineage>
        <taxon>Eukaryota</taxon>
        <taxon>Fungi</taxon>
        <taxon>Dikarya</taxon>
        <taxon>Ascomycota</taxon>
        <taxon>Saccharomycotina</taxon>
        <taxon>Saccharomycetes</taxon>
        <taxon>Saccharomycetales</taxon>
        <taxon>Saccharomycetaceae</taxon>
        <taxon>Vanderwaltozyma</taxon>
    </lineage>
</organism>
<gene>
    <name type="primary">VMA7</name>
    <name type="ORF">Kpol_1064p61</name>
</gene>
<sequence length="119" mass="13640">MSVDKRTLIAVIGDEDTTTGLLLAGIGQITKETNEKNFFIYEDGKTTKEQILNNFINYTQERQDIAILLINQHIAEKIRSDIDNYTNAFPAILEIPSKDHPYDPEKDSVLKRVRRLFGE</sequence>
<proteinExistence type="inferred from homology"/>
<accession>A7TMI5</accession>
<evidence type="ECO:0000250" key="1">
    <source>
        <dbReference type="UniProtKB" id="P39111"/>
    </source>
</evidence>
<evidence type="ECO:0000305" key="2"/>
<comment type="function">
    <text evidence="1">Subunit of the V1 complex of vacuolar(H+)-ATPase (V-ATPase), a multisubunit enzyme composed of a peripheral complex (V1) that hydrolyzes ATP and a membrane integral complex (V0) that translocates protons (By similarity). V-ATPase is responsible for acidifying and maintaining the pH of intracellular compartments (By similarity).</text>
</comment>
<comment type="subunit">
    <text evidence="1">V-ATPase is a heteromultimeric enzyme composed of a peripheral catalytic V1 complex (components A to H) attached to an integral membrane V0 proton pore complex (components: a, c, c', c'', d, e, f and VOA1).</text>
</comment>
<comment type="subcellular location">
    <subcellularLocation>
        <location evidence="1">Vacuole membrane</location>
        <topology evidence="2">Peripheral membrane protein</topology>
        <orientation evidence="2">Cytoplasmic side</orientation>
    </subcellularLocation>
</comment>
<comment type="similarity">
    <text evidence="2">Belongs to the V-ATPase F subunit family.</text>
</comment>
<name>VATF_VANPO</name>
<protein>
    <recommendedName>
        <fullName>V-type proton ATPase subunit F</fullName>
        <shortName>V-ATPase subunit F</shortName>
    </recommendedName>
    <alternativeName>
        <fullName>V-ATPase 14 kDa subunit</fullName>
    </alternativeName>
    <alternativeName>
        <fullName>Vacuolar proton pump subunit F</fullName>
    </alternativeName>
</protein>